<reference key="1">
    <citation type="journal article" date="2002" name="Nat. Biotechnol.">
        <title>Genome sequence of the dissimilatory metal ion-reducing bacterium Shewanella oneidensis.</title>
        <authorList>
            <person name="Heidelberg J.F."/>
            <person name="Paulsen I.T."/>
            <person name="Nelson K.E."/>
            <person name="Gaidos E.J."/>
            <person name="Nelson W.C."/>
            <person name="Read T.D."/>
            <person name="Eisen J.A."/>
            <person name="Seshadri R."/>
            <person name="Ward N.L."/>
            <person name="Methe B.A."/>
            <person name="Clayton R.A."/>
            <person name="Meyer T."/>
            <person name="Tsapin A."/>
            <person name="Scott J."/>
            <person name="Beanan M.J."/>
            <person name="Brinkac L.M."/>
            <person name="Daugherty S.C."/>
            <person name="DeBoy R.T."/>
            <person name="Dodson R.J."/>
            <person name="Durkin A.S."/>
            <person name="Haft D.H."/>
            <person name="Kolonay J.F."/>
            <person name="Madupu R."/>
            <person name="Peterson J.D."/>
            <person name="Umayam L.A."/>
            <person name="White O."/>
            <person name="Wolf A.M."/>
            <person name="Vamathevan J.J."/>
            <person name="Weidman J.F."/>
            <person name="Impraim M."/>
            <person name="Lee K."/>
            <person name="Berry K.J."/>
            <person name="Lee C."/>
            <person name="Mueller J."/>
            <person name="Khouri H.M."/>
            <person name="Gill J."/>
            <person name="Utterback T.R."/>
            <person name="McDonald L.A."/>
            <person name="Feldblyum T.V."/>
            <person name="Smith H.O."/>
            <person name="Venter J.C."/>
            <person name="Nealson K.H."/>
            <person name="Fraser C.M."/>
        </authorList>
    </citation>
    <scope>NUCLEOTIDE SEQUENCE [LARGE SCALE GENOMIC DNA]</scope>
    <source>
        <strain>ATCC 700550 / JCM 31522 / CIP 106686 / LMG 19005 / NCIMB 14063 / MR-1</strain>
    </source>
</reference>
<gene>
    <name evidence="1" type="primary">ftsQ</name>
    <name type="ordered locus">SO_4217</name>
</gene>
<protein>
    <recommendedName>
        <fullName evidence="1">Cell division protein FtsQ</fullName>
    </recommendedName>
</protein>
<proteinExistence type="inferred from homology"/>
<accession>Q8E9P9</accession>
<feature type="chain" id="PRO_0000414694" description="Cell division protein FtsQ">
    <location>
        <begin position="1"/>
        <end position="262"/>
    </location>
</feature>
<feature type="topological domain" description="Cytoplasmic" evidence="1">
    <location>
        <begin position="1"/>
        <end position="20"/>
    </location>
</feature>
<feature type="transmembrane region" description="Helical" evidence="1">
    <location>
        <begin position="21"/>
        <end position="41"/>
    </location>
</feature>
<feature type="topological domain" description="Periplasmic" evidence="1">
    <location>
        <begin position="42"/>
        <end position="262"/>
    </location>
</feature>
<feature type="domain" description="POTRA" evidence="2">
    <location>
        <begin position="52"/>
        <end position="121"/>
    </location>
</feature>
<name>FTSQ_SHEON</name>
<keyword id="KW-0131">Cell cycle</keyword>
<keyword id="KW-0132">Cell division</keyword>
<keyword id="KW-0997">Cell inner membrane</keyword>
<keyword id="KW-1003">Cell membrane</keyword>
<keyword id="KW-0472">Membrane</keyword>
<keyword id="KW-1185">Reference proteome</keyword>
<keyword id="KW-0812">Transmembrane</keyword>
<keyword id="KW-1133">Transmembrane helix</keyword>
<organism>
    <name type="scientific">Shewanella oneidensis (strain ATCC 700550 / JCM 31522 / CIP 106686 / LMG 19005 / NCIMB 14063 / MR-1)</name>
    <dbReference type="NCBI Taxonomy" id="211586"/>
    <lineage>
        <taxon>Bacteria</taxon>
        <taxon>Pseudomonadati</taxon>
        <taxon>Pseudomonadota</taxon>
        <taxon>Gammaproteobacteria</taxon>
        <taxon>Alteromonadales</taxon>
        <taxon>Shewanellaceae</taxon>
        <taxon>Shewanella</taxon>
    </lineage>
</organism>
<comment type="function">
    <text evidence="1">Essential cell division protein. May link together the upstream cell division proteins, which are predominantly cytoplasmic, with the downstream cell division proteins, which are predominantly periplasmic. May control correct divisome assembly.</text>
</comment>
<comment type="subunit">
    <text evidence="1">Part of a complex composed of FtsB, FtsL and FtsQ.</text>
</comment>
<comment type="subcellular location">
    <subcellularLocation>
        <location evidence="1">Cell inner membrane</location>
        <topology evidence="1">Single-pass type II membrane protein</topology>
    </subcellularLocation>
    <text evidence="1">Localizes to the division septum.</text>
</comment>
<comment type="similarity">
    <text evidence="1">Belongs to the FtsQ/DivIB family. FtsQ subfamily.</text>
</comment>
<evidence type="ECO:0000255" key="1">
    <source>
        <dbReference type="HAMAP-Rule" id="MF_00911"/>
    </source>
</evidence>
<evidence type="ECO:0000255" key="2">
    <source>
        <dbReference type="PROSITE-ProRule" id="PRU01115"/>
    </source>
</evidence>
<sequence>MSWSDKRRHWRARKSQVNWYLWSGIGFLSLVIGSFVFGGYLLHKFLNDASTLPIEAVAIKGERTYTTDKDIQIALQDLMQRSFFSADITLVQQALEALPWVYRASVRREWPAKLRVYLQEQQPAAHWNGTAWLNVHGEVFEAPSHPELEHLPHLSGPDDMGTEVLTAYAQVNSLLKINGFTLASLNLTPRHAWHATLGNGIVLDLGREDKMARIQRFITVYPLLAKQDKPIARVDLRYDTGLAVGWGDAQTREPIINDEKPR</sequence>
<dbReference type="EMBL" id="AE014299">
    <property type="protein sequence ID" value="AAN57189.1"/>
    <property type="molecule type" value="Genomic_DNA"/>
</dbReference>
<dbReference type="RefSeq" id="NP_719745.1">
    <property type="nucleotide sequence ID" value="NC_004347.2"/>
</dbReference>
<dbReference type="RefSeq" id="WP_011073898.1">
    <property type="nucleotide sequence ID" value="NC_004347.2"/>
</dbReference>
<dbReference type="SMR" id="Q8E9P9"/>
<dbReference type="STRING" id="211586.SO_4217"/>
<dbReference type="PaxDb" id="211586-SO_4217"/>
<dbReference type="KEGG" id="son:SO_4217"/>
<dbReference type="PATRIC" id="fig|211586.12.peg.4075"/>
<dbReference type="eggNOG" id="COG1589">
    <property type="taxonomic scope" value="Bacteria"/>
</dbReference>
<dbReference type="HOGENOM" id="CLU_064041_2_1_6"/>
<dbReference type="OrthoDB" id="9790370at2"/>
<dbReference type="PhylomeDB" id="Q8E9P9"/>
<dbReference type="BioCyc" id="SONE211586:G1GMP-3894-MONOMER"/>
<dbReference type="Proteomes" id="UP000008186">
    <property type="component" value="Chromosome"/>
</dbReference>
<dbReference type="GO" id="GO:0032153">
    <property type="term" value="C:cell division site"/>
    <property type="evidence" value="ECO:0000318"/>
    <property type="project" value="GO_Central"/>
</dbReference>
<dbReference type="GO" id="GO:1990587">
    <property type="term" value="C:FtsQBL complex"/>
    <property type="evidence" value="ECO:0000318"/>
    <property type="project" value="GO_Central"/>
</dbReference>
<dbReference type="GO" id="GO:0005886">
    <property type="term" value="C:plasma membrane"/>
    <property type="evidence" value="ECO:0000318"/>
    <property type="project" value="GO_Central"/>
</dbReference>
<dbReference type="GO" id="GO:0000917">
    <property type="term" value="P:division septum assembly"/>
    <property type="evidence" value="ECO:0000318"/>
    <property type="project" value="GO_Central"/>
</dbReference>
<dbReference type="GO" id="GO:0043093">
    <property type="term" value="P:FtsZ-dependent cytokinesis"/>
    <property type="evidence" value="ECO:0000318"/>
    <property type="project" value="GO_Central"/>
</dbReference>
<dbReference type="Gene3D" id="3.40.50.11690">
    <property type="entry name" value="Cell division protein FtsQ/DivIB"/>
    <property type="match status" value="1"/>
</dbReference>
<dbReference type="Gene3D" id="3.10.20.310">
    <property type="entry name" value="membrane protein fhac"/>
    <property type="match status" value="1"/>
</dbReference>
<dbReference type="HAMAP" id="MF_00911">
    <property type="entry name" value="FtsQ_subfam"/>
    <property type="match status" value="1"/>
</dbReference>
<dbReference type="InterPro" id="IPR005548">
    <property type="entry name" value="Cell_div_FtsQ/DivIB_C"/>
</dbReference>
<dbReference type="InterPro" id="IPR026579">
    <property type="entry name" value="FtsQ"/>
</dbReference>
<dbReference type="InterPro" id="IPR045335">
    <property type="entry name" value="FtsQ_C_sf"/>
</dbReference>
<dbReference type="InterPro" id="IPR034746">
    <property type="entry name" value="POTRA"/>
</dbReference>
<dbReference type="InterPro" id="IPR013685">
    <property type="entry name" value="POTRA_FtsQ_type"/>
</dbReference>
<dbReference type="PANTHER" id="PTHR35851">
    <property type="entry name" value="CELL DIVISION PROTEIN FTSQ"/>
    <property type="match status" value="1"/>
</dbReference>
<dbReference type="PANTHER" id="PTHR35851:SF1">
    <property type="entry name" value="CELL DIVISION PROTEIN FTSQ"/>
    <property type="match status" value="1"/>
</dbReference>
<dbReference type="Pfam" id="PF03799">
    <property type="entry name" value="FtsQ_DivIB_C"/>
    <property type="match status" value="1"/>
</dbReference>
<dbReference type="Pfam" id="PF08478">
    <property type="entry name" value="POTRA_1"/>
    <property type="match status" value="1"/>
</dbReference>
<dbReference type="PROSITE" id="PS51779">
    <property type="entry name" value="POTRA"/>
    <property type="match status" value="1"/>
</dbReference>